<sequence>MQKSLITKWLFISCIMVIAMIVIGGITRLTGSGLSIVEWRPVTGILPPFSFESWQAEFAKYKAFPEYNSINYGMTLSQFKFIYLLEFVHRLLGRITALIYIVPLIYFYFKDVIKNRDILPYIIALLLFCVQGFMGWYMVKSGLLNSPSVSHFRLAFHLIIAVIIYHILFYQLIKNRCDILLIPSQTDLKLPLIFSGIAITVIYVQIFLGAMVAGLDAGLIYNSFPLMGDNFIPMEIKDNFFNLANLHDPVFIQFIHRLGGYSVFLVVVVLVICLLKIEHPKLNKIAYFLMIALLMQISTGIITLLYSVPIIIASIHQLFAIILLSIIIWCYFIIKTS</sequence>
<reference key="1">
    <citation type="journal article" date="2005" name="PLoS Biol.">
        <title>The genome sequence of Rickettsia felis identifies the first putative conjugative plasmid in an obligate intracellular parasite.</title>
        <authorList>
            <person name="Ogata H."/>
            <person name="Renesto P."/>
            <person name="Audic S."/>
            <person name="Robert C."/>
            <person name="Blanc G."/>
            <person name="Fournier P.-E."/>
            <person name="Parinello H."/>
            <person name="Claverie J.-M."/>
            <person name="Raoult D."/>
        </authorList>
    </citation>
    <scope>NUCLEOTIDE SEQUENCE [LARGE SCALE GENOMIC DNA]</scope>
    <source>
        <strain>ATCC VR-1525 / URRWXCal2</strain>
    </source>
</reference>
<gene>
    <name evidence="1" type="primary">ctaA</name>
    <name type="synonym">coxW</name>
    <name type="ordered locus">RF_1024</name>
</gene>
<protein>
    <recommendedName>
        <fullName evidence="1">Heme A synthase</fullName>
        <shortName evidence="1">HAS</shortName>
        <ecNumber evidence="1">1.17.99.9</ecNumber>
    </recommendedName>
    <alternativeName>
        <fullName evidence="1">Cytochrome aa3-controlling protein</fullName>
    </alternativeName>
</protein>
<organism>
    <name type="scientific">Rickettsia felis (strain ATCC VR-1525 / URRWXCal2)</name>
    <name type="common">Rickettsia azadi</name>
    <dbReference type="NCBI Taxonomy" id="315456"/>
    <lineage>
        <taxon>Bacteria</taxon>
        <taxon>Pseudomonadati</taxon>
        <taxon>Pseudomonadota</taxon>
        <taxon>Alphaproteobacteria</taxon>
        <taxon>Rickettsiales</taxon>
        <taxon>Rickettsiaceae</taxon>
        <taxon>Rickettsieae</taxon>
        <taxon>Rickettsia</taxon>
        <taxon>spotted fever group</taxon>
    </lineage>
</organism>
<accession>Q4UKQ2</accession>
<proteinExistence type="inferred from homology"/>
<dbReference type="EC" id="1.17.99.9" evidence="1"/>
<dbReference type="EMBL" id="CP000053">
    <property type="protein sequence ID" value="AAY61875.1"/>
    <property type="molecule type" value="Genomic_DNA"/>
</dbReference>
<dbReference type="SMR" id="Q4UKQ2"/>
<dbReference type="STRING" id="315456.RF_1024"/>
<dbReference type="KEGG" id="rfe:RF_1024"/>
<dbReference type="eggNOG" id="COG1612">
    <property type="taxonomic scope" value="Bacteria"/>
</dbReference>
<dbReference type="HOGENOM" id="CLU_017627_0_0_5"/>
<dbReference type="OrthoDB" id="9793156at2"/>
<dbReference type="UniPathway" id="UPA00269">
    <property type="reaction ID" value="UER00713"/>
</dbReference>
<dbReference type="Proteomes" id="UP000008548">
    <property type="component" value="Chromosome"/>
</dbReference>
<dbReference type="GO" id="GO:0005886">
    <property type="term" value="C:plasma membrane"/>
    <property type="evidence" value="ECO:0007669"/>
    <property type="project" value="UniProtKB-SubCell"/>
</dbReference>
<dbReference type="GO" id="GO:0046872">
    <property type="term" value="F:metal ion binding"/>
    <property type="evidence" value="ECO:0007669"/>
    <property type="project" value="UniProtKB-KW"/>
</dbReference>
<dbReference type="GO" id="GO:0016653">
    <property type="term" value="F:oxidoreductase activity, acting on NAD(P)H, heme protein as acceptor"/>
    <property type="evidence" value="ECO:0007669"/>
    <property type="project" value="InterPro"/>
</dbReference>
<dbReference type="GO" id="GO:0006784">
    <property type="term" value="P:heme A biosynthetic process"/>
    <property type="evidence" value="ECO:0007669"/>
    <property type="project" value="UniProtKB-UniRule"/>
</dbReference>
<dbReference type="HAMAP" id="MF_01665">
    <property type="entry name" value="HemeA_synth_type2"/>
    <property type="match status" value="1"/>
</dbReference>
<dbReference type="InterPro" id="IPR003780">
    <property type="entry name" value="COX15/CtaA_fam"/>
</dbReference>
<dbReference type="InterPro" id="IPR023754">
    <property type="entry name" value="HemeA_Synthase_type2"/>
</dbReference>
<dbReference type="PANTHER" id="PTHR23289">
    <property type="entry name" value="CYTOCHROME C OXIDASE ASSEMBLY PROTEIN COX15"/>
    <property type="match status" value="1"/>
</dbReference>
<dbReference type="PANTHER" id="PTHR23289:SF2">
    <property type="entry name" value="CYTOCHROME C OXIDASE ASSEMBLY PROTEIN COX15 HOMOLOG"/>
    <property type="match status" value="1"/>
</dbReference>
<dbReference type="Pfam" id="PF02628">
    <property type="entry name" value="COX15-CtaA"/>
    <property type="match status" value="1"/>
</dbReference>
<keyword id="KW-1003">Cell membrane</keyword>
<keyword id="KW-0350">Heme biosynthesis</keyword>
<keyword id="KW-0408">Iron</keyword>
<keyword id="KW-0472">Membrane</keyword>
<keyword id="KW-0479">Metal-binding</keyword>
<keyword id="KW-0560">Oxidoreductase</keyword>
<keyword id="KW-0812">Transmembrane</keyword>
<keyword id="KW-1133">Transmembrane helix</keyword>
<name>CTAA_RICFE</name>
<comment type="function">
    <text evidence="1">Catalyzes the conversion of heme O to heme A by two successive hydroxylations of the methyl group at C8. The first hydroxylation forms heme I, the second hydroxylation results in an unstable dihydroxymethyl group, which spontaneously dehydrates, resulting in the formyl group of heme A.</text>
</comment>
<comment type="catalytic activity">
    <reaction evidence="1">
        <text>Fe(II)-heme o + 2 A + H2O = Fe(II)-heme a + 2 AH2</text>
        <dbReference type="Rhea" id="RHEA:63388"/>
        <dbReference type="ChEBI" id="CHEBI:13193"/>
        <dbReference type="ChEBI" id="CHEBI:15377"/>
        <dbReference type="ChEBI" id="CHEBI:17499"/>
        <dbReference type="ChEBI" id="CHEBI:60530"/>
        <dbReference type="ChEBI" id="CHEBI:61715"/>
        <dbReference type="EC" id="1.17.99.9"/>
    </reaction>
    <physiologicalReaction direction="left-to-right" evidence="1">
        <dbReference type="Rhea" id="RHEA:63389"/>
    </physiologicalReaction>
</comment>
<comment type="cofactor">
    <cofactor evidence="1">
        <name>heme b</name>
        <dbReference type="ChEBI" id="CHEBI:60344"/>
    </cofactor>
</comment>
<comment type="pathway">
    <text evidence="1">Porphyrin-containing compound metabolism; heme A biosynthesis; heme A from heme O: step 1/1.</text>
</comment>
<comment type="subunit">
    <text evidence="1">Interacts with CtaB.</text>
</comment>
<comment type="subcellular location">
    <subcellularLocation>
        <location evidence="1">Cell membrane</location>
        <topology evidence="1">Multi-pass membrane protein</topology>
    </subcellularLocation>
</comment>
<comment type="similarity">
    <text evidence="1">Belongs to the COX15/CtaA family. Type 2 subfamily.</text>
</comment>
<evidence type="ECO:0000255" key="1">
    <source>
        <dbReference type="HAMAP-Rule" id="MF_01665"/>
    </source>
</evidence>
<feature type="chain" id="PRO_0000349076" description="Heme A synthase">
    <location>
        <begin position="1"/>
        <end position="337"/>
    </location>
</feature>
<feature type="transmembrane region" description="Helical" evidence="1">
    <location>
        <begin position="6"/>
        <end position="26"/>
    </location>
</feature>
<feature type="transmembrane region" description="Helical" evidence="1">
    <location>
        <begin position="93"/>
        <end position="113"/>
    </location>
</feature>
<feature type="transmembrane region" description="Helical" evidence="1">
    <location>
        <begin position="118"/>
        <end position="138"/>
    </location>
</feature>
<feature type="transmembrane region" description="Helical" evidence="1">
    <location>
        <begin position="154"/>
        <end position="174"/>
    </location>
</feature>
<feature type="transmembrane region" description="Helical" evidence="1">
    <location>
        <begin position="192"/>
        <end position="212"/>
    </location>
</feature>
<feature type="transmembrane region" description="Helical" evidence="1">
    <location>
        <begin position="258"/>
        <end position="278"/>
    </location>
</feature>
<feature type="transmembrane region" description="Helical" evidence="1">
    <location>
        <begin position="285"/>
        <end position="305"/>
    </location>
</feature>
<feature type="transmembrane region" description="Helical" evidence="1">
    <location>
        <begin position="308"/>
        <end position="328"/>
    </location>
</feature>
<feature type="binding site" description="axial binding residue" evidence="1">
    <location>
        <position position="256"/>
    </location>
    <ligand>
        <name>heme</name>
        <dbReference type="ChEBI" id="CHEBI:30413"/>
    </ligand>
    <ligandPart>
        <name>Fe</name>
        <dbReference type="ChEBI" id="CHEBI:18248"/>
    </ligandPart>
</feature>
<feature type="binding site" description="axial binding residue" evidence="1">
    <location>
        <position position="316"/>
    </location>
    <ligand>
        <name>heme</name>
        <dbReference type="ChEBI" id="CHEBI:30413"/>
    </ligand>
    <ligandPart>
        <name>Fe</name>
        <dbReference type="ChEBI" id="CHEBI:18248"/>
    </ligandPart>
</feature>